<keyword id="KW-0963">Cytoplasm</keyword>
<keyword id="KW-0378">Hydrolase</keyword>
<keyword id="KW-0694">RNA-binding</keyword>
<keyword id="KW-0820">tRNA-binding</keyword>
<name>DTD_BACHK</name>
<comment type="function">
    <text evidence="1">An aminoacyl-tRNA editing enzyme that deacylates mischarged D-aminoacyl-tRNAs. Also deacylates mischarged glycyl-tRNA(Ala), protecting cells against glycine mischarging by AlaRS. Acts via tRNA-based rather than protein-based catalysis; rejects L-amino acids rather than detecting D-amino acids in the active site. By recycling D-aminoacyl-tRNA to D-amino acids and free tRNA molecules, this enzyme counteracts the toxicity associated with the formation of D-aminoacyl-tRNA entities in vivo and helps enforce protein L-homochirality.</text>
</comment>
<comment type="catalytic activity">
    <reaction evidence="1">
        <text>glycyl-tRNA(Ala) + H2O = tRNA(Ala) + glycine + H(+)</text>
        <dbReference type="Rhea" id="RHEA:53744"/>
        <dbReference type="Rhea" id="RHEA-COMP:9657"/>
        <dbReference type="Rhea" id="RHEA-COMP:13640"/>
        <dbReference type="ChEBI" id="CHEBI:15377"/>
        <dbReference type="ChEBI" id="CHEBI:15378"/>
        <dbReference type="ChEBI" id="CHEBI:57305"/>
        <dbReference type="ChEBI" id="CHEBI:78442"/>
        <dbReference type="ChEBI" id="CHEBI:78522"/>
        <dbReference type="EC" id="3.1.1.96"/>
    </reaction>
</comment>
<comment type="catalytic activity">
    <reaction evidence="1">
        <text>a D-aminoacyl-tRNA + H2O = a tRNA + a D-alpha-amino acid + H(+)</text>
        <dbReference type="Rhea" id="RHEA:13953"/>
        <dbReference type="Rhea" id="RHEA-COMP:10123"/>
        <dbReference type="Rhea" id="RHEA-COMP:10124"/>
        <dbReference type="ChEBI" id="CHEBI:15377"/>
        <dbReference type="ChEBI" id="CHEBI:15378"/>
        <dbReference type="ChEBI" id="CHEBI:59871"/>
        <dbReference type="ChEBI" id="CHEBI:78442"/>
        <dbReference type="ChEBI" id="CHEBI:79333"/>
        <dbReference type="EC" id="3.1.1.96"/>
    </reaction>
</comment>
<comment type="subunit">
    <text evidence="1">Homodimer.</text>
</comment>
<comment type="subcellular location">
    <subcellularLocation>
        <location evidence="1">Cytoplasm</location>
    </subcellularLocation>
</comment>
<comment type="domain">
    <text evidence="1">A Gly-cisPro motif from one monomer fits into the active site of the other monomer to allow specific chiral rejection of L-amino acids.</text>
</comment>
<comment type="similarity">
    <text evidence="1">Belongs to the DTD family.</text>
</comment>
<protein>
    <recommendedName>
        <fullName evidence="1">D-aminoacyl-tRNA deacylase</fullName>
        <shortName evidence="1">DTD</shortName>
        <ecNumber evidence="1">3.1.1.96</ecNumber>
    </recommendedName>
    <alternativeName>
        <fullName evidence="1">Gly-tRNA(Ala) deacylase</fullName>
    </alternativeName>
</protein>
<organism>
    <name type="scientific">Bacillus thuringiensis subsp. konkukian (strain 97-27)</name>
    <dbReference type="NCBI Taxonomy" id="281309"/>
    <lineage>
        <taxon>Bacteria</taxon>
        <taxon>Bacillati</taxon>
        <taxon>Bacillota</taxon>
        <taxon>Bacilli</taxon>
        <taxon>Bacillales</taxon>
        <taxon>Bacillaceae</taxon>
        <taxon>Bacillus</taxon>
        <taxon>Bacillus cereus group</taxon>
    </lineage>
</organism>
<accession>Q6HDC0</accession>
<feature type="chain" id="PRO_0000164521" description="D-aminoacyl-tRNA deacylase">
    <location>
        <begin position="1"/>
        <end position="146"/>
    </location>
</feature>
<feature type="short sequence motif" description="Gly-cisPro motif, important for rejection of L-amino acids" evidence="1">
    <location>
        <begin position="137"/>
        <end position="138"/>
    </location>
</feature>
<dbReference type="EC" id="3.1.1.96" evidence="1"/>
<dbReference type="EMBL" id="AE017355">
    <property type="protein sequence ID" value="AAT63689.1"/>
    <property type="molecule type" value="Genomic_DNA"/>
</dbReference>
<dbReference type="RefSeq" id="WP_001266954.1">
    <property type="nucleotide sequence ID" value="NC_005957.1"/>
</dbReference>
<dbReference type="RefSeq" id="YP_038456.1">
    <property type="nucleotide sequence ID" value="NC_005957.1"/>
</dbReference>
<dbReference type="SMR" id="Q6HDC0"/>
<dbReference type="KEGG" id="btk:BT9727_4139"/>
<dbReference type="PATRIC" id="fig|281309.8.peg.4417"/>
<dbReference type="HOGENOM" id="CLU_076901_1_0_9"/>
<dbReference type="PRO" id="PR:Q6HDC0"/>
<dbReference type="Proteomes" id="UP000001301">
    <property type="component" value="Chromosome"/>
</dbReference>
<dbReference type="GO" id="GO:0005737">
    <property type="term" value="C:cytoplasm"/>
    <property type="evidence" value="ECO:0007669"/>
    <property type="project" value="UniProtKB-SubCell"/>
</dbReference>
<dbReference type="GO" id="GO:0051500">
    <property type="term" value="F:D-tyrosyl-tRNA(Tyr) deacylase activity"/>
    <property type="evidence" value="ECO:0007669"/>
    <property type="project" value="TreeGrafter"/>
</dbReference>
<dbReference type="GO" id="GO:0106026">
    <property type="term" value="F:Gly-tRNA(Ala) deacylase activity"/>
    <property type="evidence" value="ECO:0007669"/>
    <property type="project" value="UniProtKB-UniRule"/>
</dbReference>
<dbReference type="GO" id="GO:0043908">
    <property type="term" value="F:Ser(Gly)-tRNA(Ala) hydrolase activity"/>
    <property type="evidence" value="ECO:0007669"/>
    <property type="project" value="UniProtKB-UniRule"/>
</dbReference>
<dbReference type="GO" id="GO:0000049">
    <property type="term" value="F:tRNA binding"/>
    <property type="evidence" value="ECO:0007669"/>
    <property type="project" value="UniProtKB-UniRule"/>
</dbReference>
<dbReference type="GO" id="GO:0019478">
    <property type="term" value="P:D-amino acid catabolic process"/>
    <property type="evidence" value="ECO:0007669"/>
    <property type="project" value="UniProtKB-UniRule"/>
</dbReference>
<dbReference type="CDD" id="cd00563">
    <property type="entry name" value="Dtyr_deacylase"/>
    <property type="match status" value="1"/>
</dbReference>
<dbReference type="FunFam" id="3.50.80.10:FF:000001">
    <property type="entry name" value="D-aminoacyl-tRNA deacylase"/>
    <property type="match status" value="1"/>
</dbReference>
<dbReference type="Gene3D" id="3.50.80.10">
    <property type="entry name" value="D-tyrosyl-tRNA(Tyr) deacylase"/>
    <property type="match status" value="1"/>
</dbReference>
<dbReference type="HAMAP" id="MF_00518">
    <property type="entry name" value="Deacylase_Dtd"/>
    <property type="match status" value="1"/>
</dbReference>
<dbReference type="InterPro" id="IPR003732">
    <property type="entry name" value="Daa-tRNA_deacyls_DTD"/>
</dbReference>
<dbReference type="InterPro" id="IPR023509">
    <property type="entry name" value="DTD-like_sf"/>
</dbReference>
<dbReference type="NCBIfam" id="TIGR00256">
    <property type="entry name" value="D-aminoacyl-tRNA deacylase"/>
    <property type="match status" value="1"/>
</dbReference>
<dbReference type="PANTHER" id="PTHR10472:SF5">
    <property type="entry name" value="D-AMINOACYL-TRNA DEACYLASE 1"/>
    <property type="match status" value="1"/>
</dbReference>
<dbReference type="PANTHER" id="PTHR10472">
    <property type="entry name" value="D-TYROSYL-TRNA TYR DEACYLASE"/>
    <property type="match status" value="1"/>
</dbReference>
<dbReference type="Pfam" id="PF02580">
    <property type="entry name" value="Tyr_Deacylase"/>
    <property type="match status" value="1"/>
</dbReference>
<dbReference type="SUPFAM" id="SSF69500">
    <property type="entry name" value="DTD-like"/>
    <property type="match status" value="1"/>
</dbReference>
<evidence type="ECO:0000255" key="1">
    <source>
        <dbReference type="HAMAP-Rule" id="MF_00518"/>
    </source>
</evidence>
<reference key="1">
    <citation type="journal article" date="2006" name="J. Bacteriol.">
        <title>Pathogenomic sequence analysis of Bacillus cereus and Bacillus thuringiensis isolates closely related to Bacillus anthracis.</title>
        <authorList>
            <person name="Han C.S."/>
            <person name="Xie G."/>
            <person name="Challacombe J.F."/>
            <person name="Altherr M.R."/>
            <person name="Bhotika S.S."/>
            <person name="Bruce D."/>
            <person name="Campbell C.S."/>
            <person name="Campbell M.L."/>
            <person name="Chen J."/>
            <person name="Chertkov O."/>
            <person name="Cleland C."/>
            <person name="Dimitrijevic M."/>
            <person name="Doggett N.A."/>
            <person name="Fawcett J.J."/>
            <person name="Glavina T."/>
            <person name="Goodwin L.A."/>
            <person name="Hill K.K."/>
            <person name="Hitchcock P."/>
            <person name="Jackson P.J."/>
            <person name="Keim P."/>
            <person name="Kewalramani A.R."/>
            <person name="Longmire J."/>
            <person name="Lucas S."/>
            <person name="Malfatti S."/>
            <person name="McMurry K."/>
            <person name="Meincke L.J."/>
            <person name="Misra M."/>
            <person name="Moseman B.L."/>
            <person name="Mundt M."/>
            <person name="Munk A.C."/>
            <person name="Okinaka R.T."/>
            <person name="Parson-Quintana B."/>
            <person name="Reilly L.P."/>
            <person name="Richardson P."/>
            <person name="Robinson D.L."/>
            <person name="Rubin E."/>
            <person name="Saunders E."/>
            <person name="Tapia R."/>
            <person name="Tesmer J.G."/>
            <person name="Thayer N."/>
            <person name="Thompson L.S."/>
            <person name="Tice H."/>
            <person name="Ticknor L.O."/>
            <person name="Wills P.L."/>
            <person name="Brettin T.S."/>
            <person name="Gilna P."/>
        </authorList>
    </citation>
    <scope>NUCLEOTIDE SEQUENCE [LARGE SCALE GENOMIC DNA]</scope>
    <source>
        <strain>97-27</strain>
    </source>
</reference>
<proteinExistence type="inferred from homology"/>
<gene>
    <name evidence="1" type="primary">dtd</name>
    <name type="ordered locus">BT9727_4139</name>
</gene>
<sequence length="146" mass="16323">MRVVLQRSKEASVTVDGEIVGQIPFGLTLLVGITHEDTEKDATYIAEKIANLRIFEDESGKMNHSVLDVEGQVLSISQFTLYGDCRKGRRPNFMDAAKPDYAEHLYDFFNEEVRKQGLHVETGKFGAMMDVSLINDGPVTLIVESK</sequence>